<keyword id="KW-0903">Direct protein sequencing</keyword>
<keyword id="KW-0952">Extinct organism protein</keyword>
<keyword id="KW-0272">Extracellular matrix</keyword>
<keyword id="KW-0325">Glycoprotein</keyword>
<keyword id="KW-0379">Hydroxylation</keyword>
<keyword id="KW-0597">Phosphoprotein</keyword>
<keyword id="KW-0964">Secreted</keyword>
<proteinExistence type="evidence at protein level"/>
<evidence type="ECO:0000250" key="1">
    <source>
        <dbReference type="UniProtKB" id="P02452"/>
    </source>
</evidence>
<evidence type="ECO:0000250" key="2">
    <source>
        <dbReference type="UniProtKB" id="P02454"/>
    </source>
</evidence>
<evidence type="ECO:0000250" key="3">
    <source>
        <dbReference type="UniProtKB" id="P02457"/>
    </source>
</evidence>
<evidence type="ECO:0000250" key="4">
    <source>
        <dbReference type="UniProtKB" id="P11087"/>
    </source>
</evidence>
<evidence type="ECO:0000256" key="5">
    <source>
        <dbReference type="SAM" id="MobiDB-lite"/>
    </source>
</evidence>
<evidence type="ECO:0000269" key="6">
    <source>
    </source>
</evidence>
<evidence type="ECO:0000303" key="7">
    <source>
    </source>
</evidence>
<evidence type="ECO:0000305" key="8"/>
<reference evidence="8" key="1">
    <citation type="journal article" date="2019" name="Nat. Ecol. Evol.">
        <title>Palaeoproteomics resolves sloth relationships.</title>
        <authorList>
            <person name="Presslee S."/>
            <person name="Slater G.J."/>
            <person name="Pujos F."/>
            <person name="Forasiepi A.M."/>
            <person name="Fischer R."/>
            <person name="Molloy K."/>
            <person name="Mackie M."/>
            <person name="Olsen J.V."/>
            <person name="Kramarz A."/>
            <person name="Taglioretti M."/>
            <person name="Scaglia F."/>
            <person name="Lezcano M."/>
            <person name="Lanata J.L."/>
            <person name="Southon J."/>
            <person name="Feranec R."/>
            <person name="Bloch J."/>
            <person name="Hajduk A."/>
            <person name="Martin F.M."/>
            <person name="Salas Gismondi R."/>
            <person name="Reguero M."/>
            <person name="de Muizon C."/>
            <person name="Greenwood A."/>
            <person name="Chait B.T."/>
            <person name="Penkman K."/>
            <person name="Collins M."/>
            <person name="MacPhee R.D.E."/>
        </authorList>
    </citation>
    <scope>PROTEIN SEQUENCE</scope>
    <scope>TISSUE SPECIFICITY</scope>
    <scope>IDENTIFICATION BY MASS SPECTROMETRY</scope>
    <source>
        <tissue evidence="7">Bone</tissue>
    </source>
</reference>
<feature type="chain" id="PRO_0000448468" description="Collagen alpha-1(I) chain">
    <location>
        <begin position="1"/>
        <end position="1014"/>
    </location>
</feature>
<feature type="region of interest" description="Disordered" evidence="5">
    <location>
        <begin position="1"/>
        <end position="1014"/>
    </location>
</feature>
<feature type="compositionally biased region" description="Low complexity" evidence="5">
    <location>
        <begin position="9"/>
        <end position="22"/>
    </location>
</feature>
<feature type="compositionally biased region" description="Low complexity" evidence="5">
    <location>
        <begin position="33"/>
        <end position="51"/>
    </location>
</feature>
<feature type="compositionally biased region" description="Basic and acidic residues" evidence="5">
    <location>
        <begin position="63"/>
        <end position="77"/>
    </location>
</feature>
<feature type="compositionally biased region" description="Low complexity" evidence="5">
    <location>
        <begin position="113"/>
        <end position="129"/>
    </location>
</feature>
<feature type="compositionally biased region" description="Low complexity" evidence="5">
    <location>
        <begin position="147"/>
        <end position="165"/>
    </location>
</feature>
<feature type="compositionally biased region" description="Pro residues" evidence="5">
    <location>
        <begin position="167"/>
        <end position="179"/>
    </location>
</feature>
<feature type="compositionally biased region" description="Low complexity" evidence="5">
    <location>
        <begin position="213"/>
        <end position="252"/>
    </location>
</feature>
<feature type="compositionally biased region" description="Gly residues" evidence="5">
    <location>
        <begin position="319"/>
        <end position="328"/>
    </location>
</feature>
<feature type="compositionally biased region" description="Low complexity" evidence="5">
    <location>
        <begin position="372"/>
        <end position="398"/>
    </location>
</feature>
<feature type="compositionally biased region" description="Low complexity" evidence="5">
    <location>
        <begin position="407"/>
        <end position="426"/>
    </location>
</feature>
<feature type="compositionally biased region" description="Low complexity" evidence="5">
    <location>
        <begin position="485"/>
        <end position="494"/>
    </location>
</feature>
<feature type="compositionally biased region" description="Low complexity" evidence="5">
    <location>
        <begin position="608"/>
        <end position="622"/>
    </location>
</feature>
<feature type="compositionally biased region" description="Low complexity" evidence="5">
    <location>
        <begin position="635"/>
        <end position="665"/>
    </location>
</feature>
<feature type="compositionally biased region" description="Low complexity" evidence="5">
    <location>
        <begin position="691"/>
        <end position="707"/>
    </location>
</feature>
<feature type="compositionally biased region" description="Low complexity" evidence="5">
    <location>
        <begin position="736"/>
        <end position="745"/>
    </location>
</feature>
<feature type="compositionally biased region" description="Low complexity" evidence="5">
    <location>
        <begin position="757"/>
        <end position="769"/>
    </location>
</feature>
<feature type="compositionally biased region" description="Pro residues" evidence="5">
    <location>
        <begin position="819"/>
        <end position="829"/>
    </location>
</feature>
<feature type="compositionally biased region" description="Pro residues" evidence="5">
    <location>
        <begin position="864"/>
        <end position="879"/>
    </location>
</feature>
<feature type="compositionally biased region" description="Low complexity" evidence="5">
    <location>
        <begin position="900"/>
        <end position="914"/>
    </location>
</feature>
<feature type="compositionally biased region" description="Basic and acidic residues" evidence="5">
    <location>
        <begin position="915"/>
        <end position="929"/>
    </location>
</feature>
<feature type="compositionally biased region" description="Low complexity" evidence="5">
    <location>
        <begin position="948"/>
        <end position="981"/>
    </location>
</feature>
<feature type="compositionally biased region" description="Pro residues" evidence="5">
    <location>
        <begin position="999"/>
        <end position="1014"/>
    </location>
</feature>
<feature type="modified residue" description="4-hydroxyproline" evidence="3">
    <location>
        <position position="25"/>
    </location>
</feature>
<feature type="modified residue" description="4-hydroxyproline" evidence="3">
    <location>
        <position position="28"/>
    </location>
</feature>
<feature type="modified residue" description="4-hydroxyproline" evidence="3">
    <location>
        <position position="30"/>
    </location>
</feature>
<feature type="modified residue" description="4-hydroxyproline" evidence="3">
    <location>
        <position position="39"/>
    </location>
</feature>
<feature type="modified residue" description="4-hydroxyproline" evidence="3">
    <location>
        <position position="42"/>
    </location>
</feature>
<feature type="modified residue" description="4-hydroxyproline" evidence="3">
    <location>
        <position position="45"/>
    </location>
</feature>
<feature type="modified residue" description="4-hydroxyproline" evidence="3">
    <location>
        <position position="60"/>
    </location>
</feature>
<feature type="modified residue" description="4-hydroxyproline" evidence="3">
    <location>
        <position position="75"/>
    </location>
</feature>
<feature type="modified residue" description="4-hydroxyproline" evidence="3">
    <location>
        <position position="81"/>
    </location>
</feature>
<feature type="modified residue" description="4-hydroxyproline" evidence="3">
    <location>
        <position position="90"/>
    </location>
</feature>
<feature type="modified residue" description="4-hydroxyproline" evidence="3">
    <location>
        <position position="96"/>
    </location>
</feature>
<feature type="modified residue" description="5-hydroxylysine; alternate" evidence="1">
    <location>
        <position position="99"/>
    </location>
</feature>
<feature type="modified residue" description="Phosphoserine" evidence="2">
    <location>
        <position position="105"/>
    </location>
</feature>
<feature type="modified residue" description="4-hydroxyproline" evidence="3">
    <location>
        <position position="123"/>
    </location>
</feature>
<feature type="modified residue" description="4-hydroxyproline" evidence="3">
    <location>
        <position position="126"/>
    </location>
</feature>
<feature type="modified residue" description="4-hydroxyproline" evidence="3">
    <location>
        <position position="132"/>
    </location>
</feature>
<feature type="modified residue" description="4-hydroxyproline" evidence="3">
    <location>
        <position position="141"/>
    </location>
</feature>
<feature type="modified residue" description="4-hydroxyproline" evidence="3">
    <location>
        <position position="147"/>
    </location>
</feature>
<feature type="modified residue" description="4-hydroxyproline" evidence="3">
    <location>
        <position position="168"/>
    </location>
</feature>
<feature type="modified residue" description="4-hydroxyproline" evidence="3">
    <location>
        <position position="177"/>
    </location>
</feature>
<feature type="modified residue" description="4-hydroxyproline" evidence="3">
    <location>
        <position position="180"/>
    </location>
</feature>
<feature type="modified residue" description="4-hydroxyproline" evidence="3">
    <location>
        <position position="207"/>
    </location>
</feature>
<feature type="modified residue" description="4-hydroxyproline" evidence="3">
    <location>
        <position position="210"/>
    </location>
</feature>
<feature type="modified residue" description="4-hydroxyproline" evidence="3">
    <location>
        <position position="222"/>
    </location>
</feature>
<feature type="modified residue" description="4-hydroxyproline" evidence="3">
    <location>
        <position position="228"/>
    </location>
</feature>
<feature type="modified residue" description="4-hydroxyproline" evidence="3">
    <location>
        <position position="237"/>
    </location>
</feature>
<feature type="modified residue" description="4-hydroxyproline" evidence="3">
    <location>
        <position position="243"/>
    </location>
</feature>
<feature type="modified residue" description="4-hydroxyproline" evidence="3">
    <location>
        <position position="246"/>
    </location>
</feature>
<feature type="modified residue" description="4-hydroxyproline" evidence="3">
    <location>
        <position position="261"/>
    </location>
</feature>
<feature type="modified residue" description="5-hydroxylysine" evidence="3">
    <location>
        <position position="264"/>
    </location>
</feature>
<feature type="modified residue" description="4-hydroxyproline" evidence="3">
    <location>
        <position position="270"/>
    </location>
</feature>
<feature type="modified residue" description="4-hydroxyproline" evidence="3">
    <location>
        <position position="273"/>
    </location>
</feature>
<feature type="modified residue" description="4-hydroxyproline" evidence="3">
    <location>
        <position position="285"/>
    </location>
</feature>
<feature type="modified residue" description="4-hydroxyproline" evidence="3">
    <location>
        <position position="294"/>
    </location>
</feature>
<feature type="modified residue" description="4-hydroxyproline" evidence="3">
    <location>
        <position position="309"/>
    </location>
</feature>
<feature type="modified residue" description="4-hydroxyproline" evidence="3">
    <location>
        <position position="315"/>
    </location>
</feature>
<feature type="modified residue" description="4-hydroxyproline" evidence="3">
    <location>
        <position position="324"/>
    </location>
</feature>
<feature type="modified residue" description="4-hydroxyproline" evidence="3">
    <location>
        <position position="330"/>
    </location>
</feature>
<feature type="modified residue" description="5-hydroxylysine" evidence="3">
    <location>
        <position position="339"/>
    </location>
</feature>
<feature type="modified residue" description="4-hydroxyproline" evidence="3">
    <location>
        <position position="348"/>
    </location>
</feature>
<feature type="modified residue" description="4-hydroxyproline" evidence="3">
    <location>
        <position position="357"/>
    </location>
</feature>
<feature type="modified residue" description="4-hydroxyproline" evidence="3">
    <location>
        <position position="363"/>
    </location>
</feature>
<feature type="modified residue" description="4-hydroxyproline" evidence="3">
    <location>
        <position position="369"/>
    </location>
</feature>
<feature type="modified residue" description="4-hydroxyproline" evidence="3">
    <location>
        <position position="378"/>
    </location>
</feature>
<feature type="modified residue" description="4-hydroxyproline" evidence="3">
    <location>
        <position position="381"/>
    </location>
</feature>
<feature type="modified residue" description="4-hydroxyproline" evidence="3">
    <location>
        <position position="390"/>
    </location>
</feature>
<feature type="modified residue" description="4-hydroxyproline" evidence="3">
    <location>
        <position position="399"/>
    </location>
</feature>
<feature type="modified residue" description="4-hydroxyproline" evidence="3">
    <location>
        <position position="405"/>
    </location>
</feature>
<feature type="modified residue" description="4-hydroxyproline" evidence="3">
    <location>
        <position position="417"/>
    </location>
</feature>
<feature type="modified residue" description="4-hydroxyproline" evidence="3">
    <location>
        <position position="426"/>
    </location>
</feature>
<feature type="modified residue" description="4-hydroxyproline" evidence="3">
    <location>
        <position position="435"/>
    </location>
</feature>
<feature type="modified residue" description="4-hydroxyproline" evidence="3">
    <location>
        <position position="438"/>
    </location>
</feature>
<feature type="modified residue" description="4-hydroxyproline" evidence="3">
    <location>
        <position position="456"/>
    </location>
</feature>
<feature type="modified residue" description="4-hydroxyproline" evidence="3">
    <location>
        <position position="473"/>
    </location>
</feature>
<feature type="modified residue" description="4-hydroxyproline" evidence="3">
    <location>
        <position position="479"/>
    </location>
</feature>
<feature type="modified residue" description="4-hydroxyproline" evidence="3">
    <location>
        <position position="485"/>
    </location>
</feature>
<feature type="modified residue" description="4-hydroxyproline" evidence="3">
    <location>
        <position position="491"/>
    </location>
</feature>
<feature type="modified residue" description="4-hydroxyproline" evidence="3">
    <location>
        <position position="497"/>
    </location>
</feature>
<feature type="modified residue" description="4-hydroxyproline" evidence="3">
    <location>
        <position position="503"/>
    </location>
</feature>
<feature type="modified residue" description="4-hydroxyproline" evidence="3">
    <location>
        <position position="515"/>
    </location>
</feature>
<feature type="modified residue" description="4-hydroxyproline" evidence="3">
    <location>
        <position position="524"/>
    </location>
</feature>
<feature type="modified residue" description="4-hydroxyproline" evidence="3">
    <location>
        <position position="535"/>
    </location>
</feature>
<feature type="modified residue" description="4-hydroxyproline" evidence="3">
    <location>
        <position position="548"/>
    </location>
</feature>
<feature type="modified residue" description="4-hydroxyproline" evidence="3">
    <location>
        <position position="554"/>
    </location>
</feature>
<feature type="modified residue" description="4-hydroxyproline" evidence="3">
    <location>
        <position position="563"/>
    </location>
</feature>
<feature type="modified residue" description="5-hydroxylysine" evidence="3">
    <location>
        <position position="575"/>
    </location>
</feature>
<feature type="modified residue" description="4-hydroxyproline" evidence="3">
    <location>
        <position position="581"/>
    </location>
</feature>
<feature type="modified residue" description="4-hydroxyproline" evidence="3">
    <location>
        <position position="596"/>
    </location>
</feature>
<feature type="modified residue" description="4-hydroxyproline" evidence="3">
    <location>
        <position position="602"/>
    </location>
</feature>
<feature type="modified residue" description="Phosphoserine" evidence="2">
    <location>
        <position position="611"/>
    </location>
</feature>
<feature type="modified residue" description="4-hydroxyproline" evidence="3">
    <location>
        <position position="623"/>
    </location>
</feature>
<feature type="modified residue" description="4-hydroxyproline" evidence="3">
    <location>
        <position position="629"/>
    </location>
</feature>
<feature type="modified residue" description="4-hydroxyproline" evidence="3">
    <location>
        <position position="632"/>
    </location>
</feature>
<feature type="modified residue" description="4-hydroxyproline" evidence="3">
    <location>
        <position position="641"/>
    </location>
</feature>
<feature type="modified residue" description="4-hydroxyproline" evidence="3">
    <location>
        <position position="647"/>
    </location>
</feature>
<feature type="modified residue" description="4-hydroxyproline" evidence="3">
    <location>
        <position position="674"/>
    </location>
</feature>
<feature type="modified residue" description="4-hydroxyproline" evidence="3">
    <location>
        <position position="683"/>
    </location>
</feature>
<feature type="modified residue" description="5-hydroxylysine" evidence="3">
    <location>
        <position position="686"/>
    </location>
</feature>
<feature type="modified residue" description="4-hydroxyproline" evidence="3">
    <location>
        <position position="695"/>
    </location>
</feature>
<feature type="modified residue" description="4-hydroxyproline" evidence="3">
    <location>
        <position position="701"/>
    </location>
</feature>
<feature type="modified residue" description="3-hydroxyproline" evidence="4">
    <location>
        <position position="709"/>
    </location>
</feature>
<feature type="modified residue" description="4-hydroxyproline" evidence="4">
    <location>
        <position position="710"/>
    </location>
</feature>
<feature type="modified residue" description="4-hydroxyproline" evidence="4">
    <location>
        <position position="719"/>
    </location>
</feature>
<feature type="modified residue" description="4-hydroxyproline" evidence="4">
    <location>
        <position position="722"/>
    </location>
</feature>
<feature type="modified residue" description="4-hydroxyproline" evidence="3">
    <location>
        <position position="743"/>
    </location>
</feature>
<feature type="modified residue" description="4-hydroxyproline" evidence="3">
    <location>
        <position position="752"/>
    </location>
</feature>
<feature type="modified residue" description="4-hydroxyproline" evidence="3">
    <location>
        <position position="760"/>
    </location>
</feature>
<feature type="modified residue" description="4-hydroxyproline" evidence="3">
    <location>
        <position position="769"/>
    </location>
</feature>
<feature type="modified residue" description="4-hydroxyproline" evidence="3">
    <location>
        <position position="787"/>
    </location>
</feature>
<feature type="modified residue" description="4-hydroxyproline" evidence="3">
    <location>
        <position position="796"/>
    </location>
</feature>
<feature type="modified residue" description="4-hydroxyproline" evidence="3">
    <location>
        <position position="799"/>
    </location>
</feature>
<feature type="modified residue" description="4-hydroxyproline" evidence="3">
    <location>
        <position position="805"/>
    </location>
</feature>
<feature type="modified residue" description="4-hydroxyproline" evidence="3">
    <location>
        <position position="820"/>
    </location>
</feature>
<feature type="modified residue" description="4-hydroxyproline" evidence="3">
    <location>
        <position position="826"/>
    </location>
</feature>
<feature type="modified residue" description="4-hydroxyproline" evidence="3">
    <location>
        <position position="832"/>
    </location>
</feature>
<feature type="modified residue" description="4-hydroxyproline" evidence="3">
    <location>
        <position position="841"/>
    </location>
</feature>
<feature type="modified residue" description="4-hydroxyproline" evidence="3">
    <location>
        <position position="847"/>
    </location>
</feature>
<feature type="modified residue" description="5-hydroxylysine" evidence="3">
    <location>
        <position position="856"/>
    </location>
</feature>
<feature type="modified residue" description="4-hydroxyproline" evidence="3">
    <location>
        <position position="867"/>
    </location>
</feature>
<feature type="modified residue" description="4-hydroxyproline" evidence="3">
    <location>
        <position position="870"/>
    </location>
</feature>
<feature type="modified residue" description="4-hydroxyproline" evidence="3">
    <location>
        <position position="873"/>
    </location>
</feature>
<feature type="modified residue" description="5-hydroxylysine" evidence="3">
    <location>
        <position position="918"/>
    </location>
</feature>
<feature type="modified residue" description="5-hydroxylysine; alternate" evidence="3">
    <location>
        <position position="930"/>
    </location>
</feature>
<feature type="modified residue" description="4-hydroxyproline" evidence="3">
    <location>
        <position position="945"/>
    </location>
</feature>
<feature type="modified residue" description="4-hydroxyproline" evidence="3">
    <location>
        <position position="948"/>
    </location>
</feature>
<feature type="modified residue" description="4-hydroxyproline" evidence="3">
    <location>
        <position position="966"/>
    </location>
</feature>
<feature type="modified residue" description="4-hydroxyproline" evidence="4">
    <location>
        <position position="981"/>
    </location>
</feature>
<feature type="modified residue" description="3-hydroxyproline" evidence="4">
    <location>
        <position position="986"/>
    </location>
</feature>
<feature type="modified residue" description="4-hydroxyproline" evidence="4">
    <location>
        <position position="987"/>
    </location>
</feature>
<feature type="modified residue" description="3-hydroxyproline" evidence="4">
    <location>
        <position position="1001"/>
    </location>
</feature>
<feature type="modified residue" description="4-hydroxyproline" evidence="4">
    <location>
        <position position="1002"/>
    </location>
</feature>
<feature type="modified residue" description="3-hydroxyproline" evidence="4">
    <location>
        <position position="1004"/>
    </location>
</feature>
<feature type="modified residue" description="4-hydroxyproline" evidence="4">
    <location>
        <position position="1005"/>
    </location>
</feature>
<feature type="modified residue" description="3-hydroxyproline" evidence="4">
    <location>
        <position position="1007"/>
    </location>
</feature>
<feature type="modified residue" description="4-hydroxyproline" evidence="4">
    <location>
        <position position="1008"/>
    </location>
</feature>
<feature type="modified residue" description="4-hydroxyproline" evidence="4">
    <location>
        <position position="1011"/>
    </location>
</feature>
<feature type="modified residue" description="4-hydroxyproline" evidence="4">
    <location>
        <position position="1014"/>
    </location>
</feature>
<feature type="glycosylation site" description="O-linked (Gal...) hydroxylysine; alternate" evidence="1">
    <location>
        <position position="99"/>
    </location>
</feature>
<feature type="glycosylation site" description="O-linked (Gal...) hydroxylysine; alternate" evidence="3">
    <location>
        <position position="930"/>
    </location>
</feature>
<feature type="unsure residue" description="I or L" evidence="7">
    <location>
        <position position="10"/>
    </location>
</feature>
<feature type="unsure residue" description="L or I" evidence="7">
    <location>
        <position position="24"/>
    </location>
</feature>
<feature type="unsure residue" description="L or I" evidence="7">
    <location>
        <position position="89"/>
    </location>
</feature>
<feature type="unsure residue" description="L or I" evidence="7">
    <location>
        <position position="95"/>
    </location>
</feature>
<feature type="unsure residue" description="L or I" evidence="7">
    <location>
        <position position="107"/>
    </location>
</feature>
<feature type="unsure residue" description="L or I" evidence="7">
    <location>
        <position position="140"/>
    </location>
</feature>
<feature type="unsure residue" description="I or L" evidence="7">
    <location>
        <position position="239"/>
    </location>
</feature>
<feature type="unsure residue" description="I or L" evidence="7">
    <location>
        <position position="290"/>
    </location>
</feature>
<feature type="unsure residue" description="L or I" evidence="7">
    <location>
        <position position="314"/>
    </location>
</feature>
<feature type="unsure residue" description="L or I" evidence="7">
    <location>
        <position position="368"/>
    </location>
</feature>
<feature type="unsure residue" description="L or I" evidence="7">
    <location>
        <position position="374"/>
    </location>
</feature>
<feature type="unsure residue" description="L or I" evidence="7">
    <location>
        <position position="478"/>
    </location>
</feature>
<feature type="unsure residue" description="L or I" evidence="7">
    <location>
        <position position="500"/>
    </location>
</feature>
<feature type="unsure residue" description="L or I" evidence="7">
    <location>
        <position position="550"/>
    </location>
</feature>
<feature type="unsure residue" description="L or I" evidence="7">
    <location>
        <position position="562"/>
    </location>
</feature>
<feature type="unsure residue" description="L or I" evidence="7">
    <location>
        <position position="589"/>
    </location>
</feature>
<feature type="unsure residue" description="I or L" evidence="7">
    <location>
        <position position="593"/>
    </location>
</feature>
<feature type="unsure residue" description="I or L" evidence="7">
    <location>
        <position position="677"/>
    </location>
</feature>
<feature type="unsure residue" description="I or L" evidence="7">
    <location>
        <position position="777"/>
    </location>
</feature>
<feature type="unsure residue" description="L or I" evidence="7">
    <location>
        <position position="786"/>
    </location>
</feature>
<feature type="unsure residue" description="L or I" evidence="7">
    <location>
        <position position="798"/>
    </location>
</feature>
<feature type="unsure residue" description="L or I" evidence="7">
    <location>
        <position position="828"/>
    </location>
</feature>
<feature type="unsure residue" description="I or L" evidence="7">
    <location>
        <position position="929"/>
    </location>
</feature>
<feature type="unsure residue" description="L or I" evidence="7">
    <location>
        <position position="938"/>
    </location>
</feature>
<feature type="unsure residue" description="L or I" evidence="7">
    <location>
        <position position="977"/>
    </location>
</feature>
<feature type="unsure residue" description="L or I" evidence="7">
    <location>
        <position position="980"/>
    </location>
</feature>
<feature type="unsure residue" description="I or L" evidence="7">
    <location>
        <position position="984"/>
    </location>
</feature>
<feature type="non-consecutive residues" evidence="7">
    <location>
        <begin position="7"/>
        <end position="8"/>
    </location>
</feature>
<feature type="non-consecutive residues" evidence="7">
    <location>
        <begin position="29"/>
        <end position="30"/>
    </location>
</feature>
<feature type="non-consecutive residues" evidence="7">
    <location>
        <begin position="472"/>
        <end position="473"/>
    </location>
</feature>
<feature type="non-consecutive residues" evidence="7">
    <location>
        <begin position="543"/>
        <end position="544"/>
    </location>
</feature>
<feature type="non-consecutive residues" evidence="7">
    <location>
        <begin position="754"/>
        <end position="755"/>
    </location>
</feature>
<feature type="non-consecutive residues" evidence="7">
    <location>
        <begin position="864"/>
        <end position="865"/>
    </location>
</feature>
<feature type="non-terminal residue" evidence="7">
    <location>
        <position position="1"/>
    </location>
</feature>
<feature type="non-terminal residue" evidence="7">
    <location>
        <position position="1014"/>
    </location>
</feature>
<name>CO1A1_MEGAE</name>
<dbReference type="GO" id="GO:0005576">
    <property type="term" value="C:extracellular region"/>
    <property type="evidence" value="ECO:0007669"/>
    <property type="project" value="UniProtKB-SubCell"/>
</dbReference>
<dbReference type="InterPro" id="IPR008160">
    <property type="entry name" value="Collagen"/>
</dbReference>
<dbReference type="InterPro" id="IPR050938">
    <property type="entry name" value="Collagen_Structural_Proteins"/>
</dbReference>
<dbReference type="PANTHER" id="PTHR37456:SF6">
    <property type="entry name" value="COLLAGEN ALPHA-1(XXIII) CHAIN-LIKE ISOFORM X2"/>
    <property type="match status" value="1"/>
</dbReference>
<dbReference type="PANTHER" id="PTHR37456">
    <property type="entry name" value="SI:CH211-266K2.1"/>
    <property type="match status" value="1"/>
</dbReference>
<dbReference type="Pfam" id="PF01391">
    <property type="entry name" value="Collagen"/>
    <property type="match status" value="9"/>
</dbReference>
<organism evidence="7">
    <name type="scientific">Megatherium americanum</name>
    <name type="common">Giant ground sloth</name>
    <dbReference type="NCBI Taxonomy" id="2546660"/>
    <lineage>
        <taxon>Eukaryota</taxon>
        <taxon>Metazoa</taxon>
        <taxon>Chordata</taxon>
        <taxon>Craniata</taxon>
        <taxon>Vertebrata</taxon>
        <taxon>Euteleostomi</taxon>
        <taxon>Mammalia</taxon>
        <taxon>Eutheria</taxon>
        <taxon>Xenarthra</taxon>
        <taxon>Pilosa</taxon>
        <taxon>Folivora</taxon>
        <taxon>Megatheriidae</taxon>
        <taxon>Megatherium</taxon>
    </lineage>
</organism>
<comment type="function">
    <text evidence="8">Type I collagen is a member of group I collagen (fibrillar forming collagen).</text>
</comment>
<comment type="subunit">
    <text evidence="8">Trimers of one alpha 2(I) and two alpha 1(I) chains.</text>
</comment>
<comment type="subcellular location">
    <subcellularLocation>
        <location>Secreted</location>
    </subcellularLocation>
    <subcellularLocation>
        <location>Secreted</location>
        <location>Extracellular space</location>
    </subcellularLocation>
    <subcellularLocation>
        <location evidence="8">Secreted</location>
        <location evidence="8">Extracellular space</location>
        <location evidence="8">Extracellular matrix</location>
    </subcellularLocation>
</comment>
<comment type="tissue specificity">
    <text evidence="6">Expressed in bones.</text>
</comment>
<comment type="PTM">
    <text evidence="1">Contains mostly 4-hydroxyproline. Proline residues at the third position of the tripeptide repeating unit (G-X-Y) are hydroxylated in some or all of the chains.</text>
</comment>
<comment type="PTM">
    <text evidence="4">Contains 3-hydroxyproline at a few sites. This modification occurs on the first proline residue in the sequence motif Gly-Pro-Hyp, where Hyp is 4-hydroxyproline.</text>
</comment>
<comment type="PTM">
    <text evidence="1">Lysine residues at the third position of the tripeptide repeating unit (G-X-Y) are 5-hydroxylated in some or all of the chains.</text>
</comment>
<comment type="PTM">
    <text evidence="1">O-glycosylated on hydroxylated lysine residues. The O-linked glycan consists of a Glc-Gal disaccharide.</text>
</comment>
<comment type="miscellaneous">
    <text evidence="6">These protein fragments were extracted from an ancient rib bone collected at Bariloche in Argentina and estimated to be around 19050 years old.</text>
</comment>
<comment type="similarity">
    <text evidence="8">Belongs to the fibrillar collagen family.</text>
</comment>
<protein>
    <recommendedName>
        <fullName evidence="7">Collagen alpha-1(I) chain</fullName>
    </recommendedName>
    <alternativeName>
        <fullName evidence="1">Alpha-1 type I collagen</fullName>
    </alternativeName>
</protein>
<accession>C0HLJ5</accession>
<sequence>SYGYDEKGGISVPGPMGPSGPRGLPGPPGPGPQGFQGPPGEPGEPGSSGPMGPRGPPGPPGKNGDDGEAGKPGRPGERGPPGPQGARGLPGTAGLPGMKGHRGFSGLDGAKGDAGPAGPKGEPGSPGENGAPGQMGPRGLPGERGRPGASGPAGARGNDGATGAAGPPGPTGPAGPPGFPGAVGAKGEAGPQGARGSEGPQGVRGEPGPPGPAGAAGPAGNPGADGQPGAKGANGAPGIAGAPGFPGARGPSGPQGPSGPPGPKGNSGEPGAPGSKGDTGAKGEPGPTGIQGPPGPAGEEGKRGARGEPGPTGLPGPPGERGGPGSRGFPGADGVAGPKGPAGERGSPGPAGPKGSPGEAGRPGEAGLPGAKGLTGSPGSPGPDGKTGPPGPAGQDGRPGPPGPPGARGQAGVMGFPGPKGAAGEPGKAGERGVPGPPGAVGPAGKDGEAGAQGPPGPAGPAGERGEQGPAGPGFQGLPGPAGPPGEAGKPGEQGVPGDLGAPGPSGARGERGFPGERGVQGPPGPAGPRGNGAPGNDGAKGDSQGAPGLQGMPGERGAAGLPGPKGDRGDAGPKGADGAPGKDGVRGLTGPIGPPGPAGAPGDKGESGPSGPAGPTGARGAPGDRGEPGPPGPAGFAGPPGADGQPGAKGEPGDAGAKGDAGPSGPAGPTGPPGPIGNVGAPGPKGARGSAGPPGATGFPGAAGRVGPPGPSGNAGPPGPPGPVGKEGGKGPRGETGPAGRPGEVGPPGPPGPGEKGSPGADGPAGAPGTPGPQGISGQRGVVGLPGQRGERGFPGLPGPSGEPGKQGPSGSSGERGPPGPVGPPGLAGPPGESGREGAPGAEGSPGRDGSPGPKGDRGETGPGPPGAPGAPGAPGPVGPAGKNGDRGETGPAGPAGPAGPAGARGPAGPQGPRGDKGETGEQGDRGIKGHRGFSGLQGPAGPPGSPGEQGPSGASGPAGPRGPPGSAGSPGKDGLNGLPGPIGPPGPRGRTGDAGPVGPPGPPGPPGPPGPP</sequence>